<dbReference type="EMBL" id="BC106435">
    <property type="protein sequence ID" value="AAI06436.1"/>
    <property type="molecule type" value="mRNA"/>
</dbReference>
<dbReference type="RefSeq" id="NP_001089736.1">
    <property type="nucleotide sequence ID" value="NM_001096267.1"/>
</dbReference>
<dbReference type="DNASU" id="734799"/>
<dbReference type="GeneID" id="734799"/>
<dbReference type="KEGG" id="xla:734799"/>
<dbReference type="AGR" id="Xenbase:XB-GENE-17331717"/>
<dbReference type="CTD" id="734799"/>
<dbReference type="Xenbase" id="XB-GENE-17331717">
    <property type="gene designation" value="tmem11.S"/>
</dbReference>
<dbReference type="OMA" id="IGNCLHK"/>
<dbReference type="OrthoDB" id="9970856at2759"/>
<dbReference type="Proteomes" id="UP000186698">
    <property type="component" value="Chromosome 9_10S"/>
</dbReference>
<dbReference type="Bgee" id="734799">
    <property type="expression patterns" value="Expressed in testis and 19 other cell types or tissues"/>
</dbReference>
<dbReference type="GO" id="GO:0005743">
    <property type="term" value="C:mitochondrial inner membrane"/>
    <property type="evidence" value="ECO:0000250"/>
    <property type="project" value="UniProtKB"/>
</dbReference>
<dbReference type="GO" id="GO:0007007">
    <property type="term" value="P:inner mitochondrial membrane organization"/>
    <property type="evidence" value="ECO:0000318"/>
    <property type="project" value="GO_Central"/>
</dbReference>
<dbReference type="GO" id="GO:0007005">
    <property type="term" value="P:mitochondrion organization"/>
    <property type="evidence" value="ECO:0000250"/>
    <property type="project" value="UniProtKB"/>
</dbReference>
<dbReference type="InterPro" id="IPR026120">
    <property type="entry name" value="TMEM11"/>
</dbReference>
<dbReference type="PANTHER" id="PTHR15099">
    <property type="entry name" value="PROTEIN PM1"/>
    <property type="match status" value="1"/>
</dbReference>
<dbReference type="PANTHER" id="PTHR15099:SF2">
    <property type="entry name" value="TRANSMEMBRANE PROTEIN 11, MITOCHONDRIAL"/>
    <property type="match status" value="1"/>
</dbReference>
<dbReference type="Pfam" id="PF14972">
    <property type="entry name" value="Mito_morph_reg"/>
    <property type="match status" value="1"/>
</dbReference>
<organism>
    <name type="scientific">Xenopus laevis</name>
    <name type="common">African clawed frog</name>
    <dbReference type="NCBI Taxonomy" id="8355"/>
    <lineage>
        <taxon>Eukaryota</taxon>
        <taxon>Metazoa</taxon>
        <taxon>Chordata</taxon>
        <taxon>Craniata</taxon>
        <taxon>Vertebrata</taxon>
        <taxon>Euteleostomi</taxon>
        <taxon>Amphibia</taxon>
        <taxon>Batrachia</taxon>
        <taxon>Anura</taxon>
        <taxon>Pipoidea</taxon>
        <taxon>Pipidae</taxon>
        <taxon>Xenopodinae</taxon>
        <taxon>Xenopus</taxon>
        <taxon>Xenopus</taxon>
    </lineage>
</organism>
<protein>
    <recommendedName>
        <fullName>Transmembrane protein 11-B, mitochondrial</fullName>
    </recommendedName>
</protein>
<gene>
    <name type="primary">tmem11-b</name>
    <name type="synonym">tmem11</name>
</gene>
<evidence type="ECO:0000250" key="1"/>
<evidence type="ECO:0000255" key="2"/>
<evidence type="ECO:0000305" key="3"/>
<feature type="chain" id="PRO_0000406212" description="Transmembrane protein 11-B, mitochondrial">
    <location>
        <begin position="1"/>
        <end position="187"/>
    </location>
</feature>
<feature type="transmembrane region" description="Helical" evidence="2">
    <location>
        <begin position="79"/>
        <end position="95"/>
    </location>
</feature>
<feature type="transmembrane region" description="Helical" evidence="2">
    <location>
        <begin position="102"/>
        <end position="119"/>
    </location>
</feature>
<comment type="function">
    <text evidence="1">Plays a role in mitochondrial morphogenesis.</text>
</comment>
<comment type="subcellular location">
    <subcellularLocation>
        <location evidence="1">Mitochondrion inner membrane</location>
        <topology evidence="1">Multi-pass membrane protein</topology>
    </subcellularLocation>
</comment>
<comment type="similarity">
    <text evidence="3">Belongs to the TMEM11 family.</text>
</comment>
<accession>Q3B8H3</accession>
<keyword id="KW-0472">Membrane</keyword>
<keyword id="KW-0496">Mitochondrion</keyword>
<keyword id="KW-0999">Mitochondrion inner membrane</keyword>
<keyword id="KW-1185">Reference proteome</keyword>
<keyword id="KW-0812">Transmembrane</keyword>
<keyword id="KW-1133">Transmembrane helix</keyword>
<reference key="1">
    <citation type="submission" date="2005-10" db="EMBL/GenBank/DDBJ databases">
        <authorList>
            <consortium name="NIH - Xenopus Gene Collection (XGC) project"/>
        </authorList>
    </citation>
    <scope>NUCLEOTIDE SEQUENCE [LARGE SCALE MRNA]</scope>
    <source>
        <tissue>Testis</tissue>
    </source>
</reference>
<proteinExistence type="evidence at transcript level"/>
<name>TM11B_XENLA</name>
<sequence>MATWGRRRAGPGGRERVALAAGECYIVHEIYNGENAQDQFEYELEQALEAQYKYIVIEPTRIGDETARWISVGNCLHKTAVLSGTACLLTPLALPSEYSHYVSLPAGVLSLACSTLYGISWQFDPCCKYQVEYDAYKLSRLPLHTLTSSTPVVLVRKDDMHRKRLHNTIALAALAYCMKKIYELYSV</sequence>